<name>MKP1_ARATH</name>
<gene>
    <name type="primary">MKP1</name>
    <name type="ordered locus">At3g55270</name>
    <name type="ORF">T26I12.150</name>
</gene>
<protein>
    <recommendedName>
        <fullName>Protein-tyrosine-phosphatase MKP1</fullName>
        <ecNumber>3.1.3.48</ecNumber>
    </recommendedName>
    <alternativeName>
        <fullName>Mitogen-activated protein kinase phosphatase 1</fullName>
        <shortName>AtMKP1</shortName>
    </alternativeName>
</protein>
<reference key="1">
    <citation type="journal article" date="2001" name="Genes Dev.">
        <title>Mitogen-activated protein kinase phosphatase is required for genotoxic stress relief in Arabidopsis.</title>
        <authorList>
            <person name="Ulm R."/>
            <person name="Revenkova E."/>
            <person name="di Sansebastiano G.P."/>
            <person name="Bechtold N."/>
            <person name="Paszkowski J."/>
        </authorList>
    </citation>
    <scope>NUCLEOTIDE SEQUENCE [MRNA]</scope>
    <scope>FUNCTION</scope>
    <scope>DISRUPTION PHENOTYPE</scope>
    <source>
        <strain>cv. Columbia</strain>
    </source>
</reference>
<reference key="2">
    <citation type="journal article" date="2000" name="Nature">
        <title>Sequence and analysis of chromosome 3 of the plant Arabidopsis thaliana.</title>
        <authorList>
            <person name="Salanoubat M."/>
            <person name="Lemcke K."/>
            <person name="Rieger M."/>
            <person name="Ansorge W."/>
            <person name="Unseld M."/>
            <person name="Fartmann B."/>
            <person name="Valle G."/>
            <person name="Bloecker H."/>
            <person name="Perez-Alonso M."/>
            <person name="Obermaier B."/>
            <person name="Delseny M."/>
            <person name="Boutry M."/>
            <person name="Grivell L.A."/>
            <person name="Mache R."/>
            <person name="Puigdomenech P."/>
            <person name="De Simone V."/>
            <person name="Choisne N."/>
            <person name="Artiguenave F."/>
            <person name="Robert C."/>
            <person name="Brottier P."/>
            <person name="Wincker P."/>
            <person name="Cattolico L."/>
            <person name="Weissenbach J."/>
            <person name="Saurin W."/>
            <person name="Quetier F."/>
            <person name="Schaefer M."/>
            <person name="Mueller-Auer S."/>
            <person name="Gabel C."/>
            <person name="Fuchs M."/>
            <person name="Benes V."/>
            <person name="Wurmbach E."/>
            <person name="Drzonek H."/>
            <person name="Erfle H."/>
            <person name="Jordan N."/>
            <person name="Bangert S."/>
            <person name="Wiedelmann R."/>
            <person name="Kranz H."/>
            <person name="Voss H."/>
            <person name="Holland R."/>
            <person name="Brandt P."/>
            <person name="Nyakatura G."/>
            <person name="Vezzi A."/>
            <person name="D'Angelo M."/>
            <person name="Pallavicini A."/>
            <person name="Toppo S."/>
            <person name="Simionati B."/>
            <person name="Conrad A."/>
            <person name="Hornischer K."/>
            <person name="Kauer G."/>
            <person name="Loehnert T.-H."/>
            <person name="Nordsiek G."/>
            <person name="Reichelt J."/>
            <person name="Scharfe M."/>
            <person name="Schoen O."/>
            <person name="Bargues M."/>
            <person name="Terol J."/>
            <person name="Climent J."/>
            <person name="Navarro P."/>
            <person name="Collado C."/>
            <person name="Perez-Perez A."/>
            <person name="Ottenwaelder B."/>
            <person name="Duchemin D."/>
            <person name="Cooke R."/>
            <person name="Laudie M."/>
            <person name="Berger-Llauro C."/>
            <person name="Purnelle B."/>
            <person name="Masuy D."/>
            <person name="de Haan M."/>
            <person name="Maarse A.C."/>
            <person name="Alcaraz J.-P."/>
            <person name="Cottet A."/>
            <person name="Casacuberta E."/>
            <person name="Monfort A."/>
            <person name="Argiriou A."/>
            <person name="Flores M."/>
            <person name="Liguori R."/>
            <person name="Vitale D."/>
            <person name="Mannhaupt G."/>
            <person name="Haase D."/>
            <person name="Schoof H."/>
            <person name="Rudd S."/>
            <person name="Zaccaria P."/>
            <person name="Mewes H.-W."/>
            <person name="Mayer K.F.X."/>
            <person name="Kaul S."/>
            <person name="Town C.D."/>
            <person name="Koo H.L."/>
            <person name="Tallon L.J."/>
            <person name="Jenkins J."/>
            <person name="Rooney T."/>
            <person name="Rizzo M."/>
            <person name="Walts A."/>
            <person name="Utterback T."/>
            <person name="Fujii C.Y."/>
            <person name="Shea T.P."/>
            <person name="Creasy T.H."/>
            <person name="Haas B."/>
            <person name="Maiti R."/>
            <person name="Wu D."/>
            <person name="Peterson J."/>
            <person name="Van Aken S."/>
            <person name="Pai G."/>
            <person name="Militscher J."/>
            <person name="Sellers P."/>
            <person name="Gill J.E."/>
            <person name="Feldblyum T.V."/>
            <person name="Preuss D."/>
            <person name="Lin X."/>
            <person name="Nierman W.C."/>
            <person name="Salzberg S.L."/>
            <person name="White O."/>
            <person name="Venter J.C."/>
            <person name="Fraser C.M."/>
            <person name="Kaneko T."/>
            <person name="Nakamura Y."/>
            <person name="Sato S."/>
            <person name="Kato T."/>
            <person name="Asamizu E."/>
            <person name="Sasamoto S."/>
            <person name="Kimura T."/>
            <person name="Idesawa K."/>
            <person name="Kawashima K."/>
            <person name="Kishida Y."/>
            <person name="Kiyokawa C."/>
            <person name="Kohara M."/>
            <person name="Matsumoto M."/>
            <person name="Matsuno A."/>
            <person name="Muraki A."/>
            <person name="Nakayama S."/>
            <person name="Nakazaki N."/>
            <person name="Shinpo S."/>
            <person name="Takeuchi C."/>
            <person name="Wada T."/>
            <person name="Watanabe A."/>
            <person name="Yamada M."/>
            <person name="Yasuda M."/>
            <person name="Tabata S."/>
        </authorList>
    </citation>
    <scope>NUCLEOTIDE SEQUENCE [LARGE SCALE GENOMIC DNA]</scope>
    <source>
        <strain>cv. Columbia</strain>
    </source>
</reference>
<reference key="3">
    <citation type="journal article" date="2017" name="Plant J.">
        <title>Araport11: a complete reannotation of the Arabidopsis thaliana reference genome.</title>
        <authorList>
            <person name="Cheng C.Y."/>
            <person name="Krishnakumar V."/>
            <person name="Chan A.P."/>
            <person name="Thibaud-Nissen F."/>
            <person name="Schobel S."/>
            <person name="Town C.D."/>
        </authorList>
    </citation>
    <scope>GENOME REANNOTATION</scope>
    <source>
        <strain>cv. Columbia</strain>
    </source>
</reference>
<reference key="4">
    <citation type="journal article" date="2003" name="Science">
        <title>Empirical analysis of transcriptional activity in the Arabidopsis genome.</title>
        <authorList>
            <person name="Yamada K."/>
            <person name="Lim J."/>
            <person name="Dale J.M."/>
            <person name="Chen H."/>
            <person name="Shinn P."/>
            <person name="Palm C.J."/>
            <person name="Southwick A.M."/>
            <person name="Wu H.C."/>
            <person name="Kim C.J."/>
            <person name="Nguyen M."/>
            <person name="Pham P.K."/>
            <person name="Cheuk R.F."/>
            <person name="Karlin-Newmann G."/>
            <person name="Liu S.X."/>
            <person name="Lam B."/>
            <person name="Sakano H."/>
            <person name="Wu T."/>
            <person name="Yu G."/>
            <person name="Miranda M."/>
            <person name="Quach H.L."/>
            <person name="Tripp M."/>
            <person name="Chang C.H."/>
            <person name="Lee J.M."/>
            <person name="Toriumi M.J."/>
            <person name="Chan M.M."/>
            <person name="Tang C.C."/>
            <person name="Onodera C.S."/>
            <person name="Deng J.M."/>
            <person name="Akiyama K."/>
            <person name="Ansari Y."/>
            <person name="Arakawa T."/>
            <person name="Banh J."/>
            <person name="Banno F."/>
            <person name="Bowser L."/>
            <person name="Brooks S.Y."/>
            <person name="Carninci P."/>
            <person name="Chao Q."/>
            <person name="Choy N."/>
            <person name="Enju A."/>
            <person name="Goldsmith A.D."/>
            <person name="Gurjal M."/>
            <person name="Hansen N.F."/>
            <person name="Hayashizaki Y."/>
            <person name="Johnson-Hopson C."/>
            <person name="Hsuan V.W."/>
            <person name="Iida K."/>
            <person name="Karnes M."/>
            <person name="Khan S."/>
            <person name="Koesema E."/>
            <person name="Ishida J."/>
            <person name="Jiang P.X."/>
            <person name="Jones T."/>
            <person name="Kawai J."/>
            <person name="Kamiya A."/>
            <person name="Meyers C."/>
            <person name="Nakajima M."/>
            <person name="Narusaka M."/>
            <person name="Seki M."/>
            <person name="Sakurai T."/>
            <person name="Satou M."/>
            <person name="Tamse R."/>
            <person name="Vaysberg M."/>
            <person name="Wallender E.K."/>
            <person name="Wong C."/>
            <person name="Yamamura Y."/>
            <person name="Yuan S."/>
            <person name="Shinozaki K."/>
            <person name="Davis R.W."/>
            <person name="Theologis A."/>
            <person name="Ecker J.R."/>
        </authorList>
    </citation>
    <scope>NUCLEOTIDE SEQUENCE [LARGE SCALE MRNA]</scope>
    <source>
        <strain>cv. Columbia</strain>
    </source>
</reference>
<reference key="5">
    <citation type="journal article" date="2002" name="EMBO J.">
        <title>Distinct regulation of salinity and genotoxic stress responses by Arabidopsis MAP kinase phosphatase 1.</title>
        <authorList>
            <person name="Ulm R."/>
            <person name="Ichimura K."/>
            <person name="Mizoguchi T."/>
            <person name="Peck S.C."/>
            <person name="Zhu T."/>
            <person name="Wang X."/>
            <person name="Shinozaki K."/>
            <person name="Paszkowski J."/>
        </authorList>
    </citation>
    <scope>FUNCTION</scope>
    <scope>INTERACTION WITH MPK6</scope>
    <scope>MUTAGENESIS OF CYS-235</scope>
</reference>
<reference key="6">
    <citation type="journal article" date="2006" name="Plant Cell Environ.">
        <title>The role of NADPH oxidase and MAP kinase phosphatase in UV-B-dependent gene expression in Arabidopsis.</title>
        <authorList>
            <person name="Kalbina I."/>
            <person name="Strid A."/>
        </authorList>
    </citation>
    <scope>FUNCTION</scope>
</reference>
<reference key="7">
    <citation type="journal article" date="2009" name="J. Proteomics">
        <title>Phosphoproteomic analysis of nuclei-enriched fractions from Arabidopsis thaliana.</title>
        <authorList>
            <person name="Jones A.M.E."/>
            <person name="MacLean D."/>
            <person name="Studholme D.J."/>
            <person name="Serna-Sanz A."/>
            <person name="Andreasson E."/>
            <person name="Rathjen J.P."/>
            <person name="Peck S.C."/>
        </authorList>
    </citation>
    <scope>IDENTIFICATION BY MASS SPECTROMETRY [LARGE SCALE ANALYSIS]</scope>
    <source>
        <strain>cv. Columbia</strain>
    </source>
</reference>
<reference key="8">
    <citation type="journal article" date="2009" name="Plant Cell">
        <title>MAP kinase phosphatase1 and protein tyrosine phosphatase1 are repressors of salicylic acid synthesis and SNC1-mediated responses in Arabidopsis.</title>
        <authorList>
            <person name="Bartels S."/>
            <person name="Anderson J.C."/>
            <person name="Gonzalez Besteiro M.A."/>
            <person name="Carreri A."/>
            <person name="Hirt H."/>
            <person name="Buchala A."/>
            <person name="Metraux J.P."/>
            <person name="Peck S.C."/>
            <person name="Ulm R."/>
        </authorList>
    </citation>
    <scope>FUNCTION</scope>
    <scope>INTERACTION WITH MPK6</scope>
    <scope>SUBCELLULAR LOCATION</scope>
    <scope>DISRUPTION PHENOTYPE</scope>
    <source>
        <strain>cv. Columbia</strain>
    </source>
</reference>
<reference key="9">
    <citation type="journal article" date="2009" name="Plant Physiol.">
        <title>Large-scale Arabidopsis phosphoproteome profiling reveals novel chloroplast kinase substrates and phosphorylation networks.</title>
        <authorList>
            <person name="Reiland S."/>
            <person name="Messerli G."/>
            <person name="Baerenfaller K."/>
            <person name="Gerrits B."/>
            <person name="Endler A."/>
            <person name="Grossmann J."/>
            <person name="Gruissem W."/>
            <person name="Baginsky S."/>
        </authorList>
    </citation>
    <scope>IDENTIFICATION BY MASS SPECTROMETRY [LARGE SCALE ANALYSIS]</scope>
</reference>
<reference key="10">
    <citation type="journal article" date="2011" name="Plant Cell Rep.">
        <title>Arabidopsis MAP kinase phosphatase 1 is phosphorylated and activated by its substrate AtMPK6.</title>
        <authorList>
            <person name="Park H.C."/>
            <person name="Song E.H."/>
            <person name="Nguyen X.C."/>
            <person name="Lee K."/>
            <person name="Kim K.E."/>
            <person name="Kim H.S."/>
            <person name="Lee S.M."/>
            <person name="Kim S.H."/>
            <person name="Bae D.W."/>
            <person name="Yun D.J."/>
            <person name="Chung W.S."/>
        </authorList>
    </citation>
    <scope>FUNCTION</scope>
    <scope>INTERACTION WITH MPK6</scope>
    <scope>PHOSPHORYLATION AT THR-64; THR-109; SER-558 AND SER-572</scope>
</reference>
<reference key="11">
    <citation type="journal article" date="2011" name="Plant J.">
        <title>Arabidopsis MAP Kinase Phosphatase 1 (AtMKP1) negatively regulates MPK6-mediated PAMP responses and resistance against bacteria.</title>
        <authorList>
            <person name="Anderson J.C."/>
            <person name="Bartels S."/>
            <person name="Gonzalez Besteiro M.A."/>
            <person name="Shahollari B."/>
            <person name="Ulm R."/>
            <person name="Peck S.C."/>
        </authorList>
    </citation>
    <scope>FUNCTION</scope>
    <source>
        <strain>cv. Wassilewskija</strain>
    </source>
</reference>
<reference key="12">
    <citation type="journal article" date="2011" name="Plant J.">
        <title>Arabidopsis MAP kinase phosphatase 1 and its target MAP kinases 3 and 6 antagonistically determine UV-B stress tolerance, independent of the UVR8 photoreceptor pathway.</title>
        <authorList>
            <person name="Besteiro M.A."/>
            <person name="Bartels S."/>
            <person name="Albert A."/>
            <person name="Ulm R."/>
        </authorList>
    </citation>
    <scope>FUNCTION</scope>
</reference>
<dbReference type="EC" id="3.1.3.48"/>
<dbReference type="EMBL" id="AF312745">
    <property type="protein sequence ID" value="AAK29382.1"/>
    <property type="molecule type" value="mRNA"/>
</dbReference>
<dbReference type="EMBL" id="AL132954">
    <property type="protein sequence ID" value="CAB75761.1"/>
    <property type="status" value="ALT_SEQ"/>
    <property type="molecule type" value="Genomic_DNA"/>
</dbReference>
<dbReference type="EMBL" id="CP002686">
    <property type="protein sequence ID" value="AEE79361.2"/>
    <property type="molecule type" value="Genomic_DNA"/>
</dbReference>
<dbReference type="EMBL" id="AY054509">
    <property type="protein sequence ID" value="AAK96700.1"/>
    <property type="molecule type" value="mRNA"/>
</dbReference>
<dbReference type="PIR" id="T47666">
    <property type="entry name" value="T47666"/>
</dbReference>
<dbReference type="RefSeq" id="NP_567018.5">
    <property type="nucleotide sequence ID" value="NM_115385.7"/>
</dbReference>
<dbReference type="SMR" id="Q9C5S1"/>
<dbReference type="BioGRID" id="10009">
    <property type="interactions" value="1"/>
</dbReference>
<dbReference type="FunCoup" id="Q9C5S1">
    <property type="interactions" value="14"/>
</dbReference>
<dbReference type="STRING" id="3702.Q9C5S1"/>
<dbReference type="GlyGen" id="Q9C5S1">
    <property type="glycosylation" value="1 site"/>
</dbReference>
<dbReference type="iPTMnet" id="Q9C5S1"/>
<dbReference type="PaxDb" id="3702-AT3G55270.1"/>
<dbReference type="ProteomicsDB" id="238292"/>
<dbReference type="GeneID" id="824693"/>
<dbReference type="KEGG" id="ath:AT3G55270"/>
<dbReference type="Araport" id="AT3G55270"/>
<dbReference type="TAIR" id="AT3G55270"/>
<dbReference type="eggNOG" id="KOG1716">
    <property type="taxonomic scope" value="Eukaryota"/>
</dbReference>
<dbReference type="HOGENOM" id="CLU_357766_0_0_1"/>
<dbReference type="InParanoid" id="Q9C5S1"/>
<dbReference type="PhylomeDB" id="Q9C5S1"/>
<dbReference type="PRO" id="PR:Q9C5S1"/>
<dbReference type="Proteomes" id="UP000006548">
    <property type="component" value="Chromosome 3"/>
</dbReference>
<dbReference type="ExpressionAtlas" id="Q9C5S1">
    <property type="expression patterns" value="baseline and differential"/>
</dbReference>
<dbReference type="GO" id="GO:0005829">
    <property type="term" value="C:cytosol"/>
    <property type="evidence" value="ECO:0007669"/>
    <property type="project" value="UniProtKB-SubCell"/>
</dbReference>
<dbReference type="GO" id="GO:0017017">
    <property type="term" value="F:MAP kinase tyrosine/serine/threonine phosphatase activity"/>
    <property type="evidence" value="ECO:0000314"/>
    <property type="project" value="TAIR"/>
</dbReference>
<dbReference type="GO" id="GO:0004725">
    <property type="term" value="F:protein tyrosine phosphatase activity"/>
    <property type="evidence" value="ECO:0007669"/>
    <property type="project" value="UniProtKB-EC"/>
</dbReference>
<dbReference type="GO" id="GO:0006952">
    <property type="term" value="P:defense response"/>
    <property type="evidence" value="ECO:0007669"/>
    <property type="project" value="UniProtKB-KW"/>
</dbReference>
<dbReference type="GO" id="GO:1902065">
    <property type="term" value="P:response to L-glutamate"/>
    <property type="evidence" value="ECO:0000315"/>
    <property type="project" value="TAIR"/>
</dbReference>
<dbReference type="GO" id="GO:0009651">
    <property type="term" value="P:response to salt stress"/>
    <property type="evidence" value="ECO:0000315"/>
    <property type="project" value="TAIR"/>
</dbReference>
<dbReference type="GO" id="GO:0010224">
    <property type="term" value="P:response to UV-B"/>
    <property type="evidence" value="ECO:0000315"/>
    <property type="project" value="TAIR"/>
</dbReference>
<dbReference type="GO" id="GO:0010225">
    <property type="term" value="P:response to UV-C"/>
    <property type="evidence" value="ECO:0000315"/>
    <property type="project" value="TAIR"/>
</dbReference>
<dbReference type="CDD" id="cd14498">
    <property type="entry name" value="DSP"/>
    <property type="match status" value="1"/>
</dbReference>
<dbReference type="Gene3D" id="3.90.190.10">
    <property type="entry name" value="Protein tyrosine phosphatase superfamily"/>
    <property type="match status" value="1"/>
</dbReference>
<dbReference type="Gene3D" id="3.40.20.10">
    <property type="entry name" value="Severin"/>
    <property type="match status" value="1"/>
</dbReference>
<dbReference type="InterPro" id="IPR029006">
    <property type="entry name" value="ADF-H/Gelsolin-like_dom_sf"/>
</dbReference>
<dbReference type="InterPro" id="IPR000340">
    <property type="entry name" value="Dual-sp_phosphatase_cat-dom"/>
</dbReference>
<dbReference type="InterPro" id="IPR029021">
    <property type="entry name" value="Prot-tyrosine_phosphatase-like"/>
</dbReference>
<dbReference type="InterPro" id="IPR016130">
    <property type="entry name" value="Tyr_Pase_AS"/>
</dbReference>
<dbReference type="InterPro" id="IPR000387">
    <property type="entry name" value="Tyr_Pase_dom"/>
</dbReference>
<dbReference type="InterPro" id="IPR020422">
    <property type="entry name" value="TYR_PHOSPHATASE_DUAL_dom"/>
</dbReference>
<dbReference type="PANTHER" id="PTHR46381">
    <property type="entry name" value="MKPA PROTEIN"/>
    <property type="match status" value="1"/>
</dbReference>
<dbReference type="PANTHER" id="PTHR46381:SF4">
    <property type="entry name" value="PROTEIN-TYROSINE-PHOSPHATASE MKP1"/>
    <property type="match status" value="1"/>
</dbReference>
<dbReference type="Pfam" id="PF00782">
    <property type="entry name" value="DSPc"/>
    <property type="match status" value="1"/>
</dbReference>
<dbReference type="Pfam" id="PF25466">
    <property type="entry name" value="MPK1_gelsolin_C"/>
    <property type="match status" value="1"/>
</dbReference>
<dbReference type="SMART" id="SM00195">
    <property type="entry name" value="DSPc"/>
    <property type="match status" value="1"/>
</dbReference>
<dbReference type="SUPFAM" id="SSF52799">
    <property type="entry name" value="(Phosphotyrosine protein) phosphatases II"/>
    <property type="match status" value="1"/>
</dbReference>
<dbReference type="SUPFAM" id="SSF55753">
    <property type="entry name" value="Actin depolymerizing proteins"/>
    <property type="match status" value="1"/>
</dbReference>
<dbReference type="PROSITE" id="PS00383">
    <property type="entry name" value="TYR_PHOSPHATASE_1"/>
    <property type="match status" value="1"/>
</dbReference>
<dbReference type="PROSITE" id="PS50056">
    <property type="entry name" value="TYR_PHOSPHATASE_2"/>
    <property type="match status" value="1"/>
</dbReference>
<dbReference type="PROSITE" id="PS50054">
    <property type="entry name" value="TYR_PHOSPHATASE_DUAL"/>
    <property type="match status" value="1"/>
</dbReference>
<comment type="function">
    <text evidence="5 6 7 8 9 10 11">Protein-tyrosine-phosphatase that acts as a negative regulator of MPK6 and MPK3 signaling by dephosphorylating and repressing MPK6 and MPK3. Modulates defense response by repressing salicylic acid (SA) production, camalexin biosynthesis and SNC1-mediated responses. Acts as a negative regulator of MPK6-mediated pathogen-associated molecular pattern (PAMP) responses, including MPK6 and MPK3 activation, accumulation of extracellular reactive oxygen species and inhibition of seedling growth. Involved in UV-B stress tolerance. May be involved in salt and genotoxic stress responses.</text>
</comment>
<comment type="catalytic activity">
    <reaction evidence="3">
        <text>O-phospho-L-tyrosyl-[protein] + H2O = L-tyrosyl-[protein] + phosphate</text>
        <dbReference type="Rhea" id="RHEA:10684"/>
        <dbReference type="Rhea" id="RHEA-COMP:10136"/>
        <dbReference type="Rhea" id="RHEA-COMP:20101"/>
        <dbReference type="ChEBI" id="CHEBI:15377"/>
        <dbReference type="ChEBI" id="CHEBI:43474"/>
        <dbReference type="ChEBI" id="CHEBI:46858"/>
        <dbReference type="ChEBI" id="CHEBI:61978"/>
        <dbReference type="EC" id="3.1.3.48"/>
    </reaction>
</comment>
<comment type="subunit">
    <text evidence="6 8 10">Interacts with MPK6. May interact with MPK3 and MPK4.</text>
</comment>
<comment type="subcellular location">
    <subcellularLocation>
        <location evidence="8">Cytoplasm</location>
        <location evidence="8">Cytosol</location>
    </subcellularLocation>
</comment>
<comment type="PTM">
    <text evidence="10">Phosphorylated on threonine and serine residues by MPK6.</text>
</comment>
<comment type="disruption phenotype">
    <text evidence="5 8">No visible phenotype under normal growth conditions in Wassilewskija (Ws) ecotype (PubMed:11274055), but Columbia (Col) ecotype show growth defects, elevated levels of salicylic acid (SA) and constitutive defense responses (PubMed:19789277).</text>
</comment>
<comment type="miscellaneous">
    <text evidence="13">The observed mkp1 phenotype in Col ecotype is largely due to the Col-specific TIR-NB-LRR receptor-like protein SNC1, which is absent in Ws ecotype.</text>
</comment>
<comment type="sequence caution" evidence="12">
    <conflict type="erroneous gene model prediction">
        <sequence resource="EMBL-CDS" id="CAB75761"/>
    </conflict>
</comment>
<accession>Q9C5S1</accession>
<accession>Q940K2</accession>
<accession>Q9M3C4</accession>
<feature type="chain" id="PRO_0000417330" description="Protein-tyrosine-phosphatase MKP1">
    <location>
        <begin position="1"/>
        <end position="784"/>
    </location>
</feature>
<feature type="domain" description="Tyrosine-protein phosphatase" evidence="2">
    <location>
        <begin position="149"/>
        <end position="291"/>
    </location>
</feature>
<feature type="region of interest" description="Disordered" evidence="4">
    <location>
        <begin position="1"/>
        <end position="73"/>
    </location>
</feature>
<feature type="region of interest" description="Disordered" evidence="4">
    <location>
        <begin position="94"/>
        <end position="118"/>
    </location>
</feature>
<feature type="region of interest" description="Disordered" evidence="4">
    <location>
        <begin position="488"/>
        <end position="586"/>
    </location>
</feature>
<feature type="compositionally biased region" description="Low complexity" evidence="4">
    <location>
        <begin position="22"/>
        <end position="34"/>
    </location>
</feature>
<feature type="compositionally biased region" description="Low complexity" evidence="4">
    <location>
        <begin position="489"/>
        <end position="510"/>
    </location>
</feature>
<feature type="compositionally biased region" description="Low complexity" evidence="4">
    <location>
        <begin position="521"/>
        <end position="553"/>
    </location>
</feature>
<feature type="compositionally biased region" description="Polar residues" evidence="4">
    <location>
        <begin position="554"/>
        <end position="577"/>
    </location>
</feature>
<feature type="active site" description="Phosphocysteine intermediate" evidence="2">
    <location>
        <position position="235"/>
    </location>
</feature>
<feature type="binding site" evidence="1">
    <location>
        <begin position="235"/>
        <end position="241"/>
    </location>
    <ligand>
        <name>substrate</name>
    </ligand>
</feature>
<feature type="modified residue" description="Phosphothreonine" evidence="10">
    <location>
        <position position="64"/>
    </location>
</feature>
<feature type="modified residue" description="Phosphothreonine" evidence="10">
    <location>
        <position position="109"/>
    </location>
</feature>
<feature type="modified residue" description="Phosphoserine" evidence="10">
    <location>
        <position position="558"/>
    </location>
</feature>
<feature type="modified residue" description="Phosphoserine" evidence="10">
    <location>
        <position position="572"/>
    </location>
</feature>
<feature type="mutagenesis site" description="Loss of activity." evidence="6">
    <original>C</original>
    <variation>S</variation>
    <location>
        <position position="235"/>
    </location>
</feature>
<feature type="sequence conflict" description="In Ref. 4; AAK96700." evidence="12" ref="4">
    <original>S</original>
    <variation>N</variation>
    <location>
        <position position="712"/>
    </location>
</feature>
<organism>
    <name type="scientific">Arabidopsis thaliana</name>
    <name type="common">Mouse-ear cress</name>
    <dbReference type="NCBI Taxonomy" id="3702"/>
    <lineage>
        <taxon>Eukaryota</taxon>
        <taxon>Viridiplantae</taxon>
        <taxon>Streptophyta</taxon>
        <taxon>Embryophyta</taxon>
        <taxon>Tracheophyta</taxon>
        <taxon>Spermatophyta</taxon>
        <taxon>Magnoliopsida</taxon>
        <taxon>eudicotyledons</taxon>
        <taxon>Gunneridae</taxon>
        <taxon>Pentapetalae</taxon>
        <taxon>rosids</taxon>
        <taxon>malvids</taxon>
        <taxon>Brassicales</taxon>
        <taxon>Brassicaceae</taxon>
        <taxon>Camelineae</taxon>
        <taxon>Arabidopsis</taxon>
    </lineage>
</organism>
<keyword id="KW-0963">Cytoplasm</keyword>
<keyword id="KW-0378">Hydrolase</keyword>
<keyword id="KW-0597">Phosphoprotein</keyword>
<keyword id="KW-0611">Plant defense</keyword>
<keyword id="KW-0904">Protein phosphatase</keyword>
<keyword id="KW-1185">Reference proteome</keyword>
<keyword id="KW-0346">Stress response</keyword>
<evidence type="ECO:0000250" key="1"/>
<evidence type="ECO:0000255" key="2">
    <source>
        <dbReference type="PROSITE-ProRule" id="PRU00160"/>
    </source>
</evidence>
<evidence type="ECO:0000255" key="3">
    <source>
        <dbReference type="PROSITE-ProRule" id="PRU10044"/>
    </source>
</evidence>
<evidence type="ECO:0000256" key="4">
    <source>
        <dbReference type="SAM" id="MobiDB-lite"/>
    </source>
</evidence>
<evidence type="ECO:0000269" key="5">
    <source>
    </source>
</evidence>
<evidence type="ECO:0000269" key="6">
    <source>
    </source>
</evidence>
<evidence type="ECO:0000269" key="7">
    <source>
    </source>
</evidence>
<evidence type="ECO:0000269" key="8">
    <source>
    </source>
</evidence>
<evidence type="ECO:0000269" key="9">
    <source>
    </source>
</evidence>
<evidence type="ECO:0000269" key="10">
    <source>
    </source>
</evidence>
<evidence type="ECO:0000269" key="11">
    <source>
    </source>
</evidence>
<evidence type="ECO:0000305" key="12"/>
<evidence type="ECO:0000305" key="13">
    <source>
    </source>
</evidence>
<proteinExistence type="evidence at protein level"/>
<sequence length="784" mass="85964">MVGREDAMGNDEAPPGSKKMFWRSASWSASRTASQVPEGDEQSLNIPCAISSGPSRRCPAAPLTPRSHHNSKARACLPPLQPLAISRRSLDEWPKAGSDDVGEWPHPPTPSGNKTGERLKLDLSSTQQRVTDKSSGLAKREKIAFFDKECSKVADHIYVGGDAVAKDKSILKNNGITHILNCVGFICPEYFKSDFCYRSLWLQDSPSEDITSILYDVFDYFEDVREQSGRIFVHCCQGVSRSTSLVIAYLMWREGQSFDDAFQYVKSARGIADPNMGFACQLLQCQKRVHAFPLSPTSLLRMYKMSPHSPYDPLHLVPKLLNDPCPGSLDSRGAFIIQLPSAIYIWVGRQCETIMEKDAKAAVCQIARYEKVEAPIMVVREGDEPVYYWDAFASILPMIGGSVIKVQPGDRKVDAYNLDFEIFQKAIEGGFVPTLASSNNEHETHLPARENSWSSLKCKFASRFDKGFRYVSKTPLSRVYSDSMMIVHSSGSPSSTTSSSSTASPPFLSPDSVCSTNSGNSLKSFSQSSGRSSLRPSIPPSLTLPKFSSLSLLPSQTSPKESRGVNTFLQPSPNRKASPSLAERRGSLKGSLKLPGLADSNRGTPAFTLHPDDSNDIVFNLEGIRNGDLYPPSDCKGTSVDSDLPEKEIISLISCSKSDRHKSGGDTDSSGQPLACRWPSMEMITKLSRAYLDSESVIAIPLPSDAVGETGSRNLYIWIGKSFSLDNNCSLVDSNKAADTVENVDWVQIGESILCQMDLPKDTPIKIVRESEDQTELLALLSAL</sequence>